<feature type="chain" id="PRO_0000143234" description="Maturase K">
    <location>
        <begin position="1"/>
        <end position="506"/>
    </location>
</feature>
<sequence length="506" mass="60000">MXECKGYLELXRSXXHDFIYPLIFQEYIYALAHDRGLNRSIFFENAXYDNKSSLLIVKRLITHLIXQMYXQNHFLFYTNNFXPDPFGGYXTGVXSXMIFEGFGVVVEIPFYLRLLSFLEGKERVKSHNLRSLHSIFPFLEXXXXXXXXXXXXXXXXXXXXXXXXXXXXXXXXXXXXXXXIRFFLHEYPNRNSLITPKKYSFSFSKRNKKFFLFLYNFHVYEYESIFVFLRNQSSHLCSISFETFLERILFYKKIELEVFAKHFKAILWVFKDPFLHYVRYRGKFILASKGSSLLMNKWEYYLVNFWKCYFYIWAQPRRIHIKQLSKNSLDFLGYLSNVRLKPSMVRSQMIENSFLIENAGKKLDTLVPITSMIGSLSKAKFCNVLGHPMNKPVWGGLSDSXIMERIRAXIXKSSHYYSXSLKKISLYXIKYILRLPGAKTLARKHKITVRSFLKRLGVGLLEEFFTEEEQVFYLTFPKASSTSRKLYQRRVWYLDIFYINDTPNHE</sequence>
<evidence type="ECO:0000255" key="1">
    <source>
        <dbReference type="HAMAP-Rule" id="MF_01390"/>
    </source>
</evidence>
<name>MATK_ANDPO</name>
<protein>
    <recommendedName>
        <fullName evidence="1">Maturase K</fullName>
    </recommendedName>
    <alternativeName>
        <fullName evidence="1">Intron maturase</fullName>
    </alternativeName>
</protein>
<geneLocation type="chloroplast"/>
<accession>Q9TLD8</accession>
<keyword id="KW-0150">Chloroplast</keyword>
<keyword id="KW-0507">mRNA processing</keyword>
<keyword id="KW-0934">Plastid</keyword>
<keyword id="KW-0694">RNA-binding</keyword>
<keyword id="KW-0819">tRNA processing</keyword>
<comment type="function">
    <text evidence="1">Usually encoded in the trnK tRNA gene intron. Probably assists in splicing its own and other chloroplast group II introns.</text>
</comment>
<comment type="subcellular location">
    <subcellularLocation>
        <location>Plastid</location>
        <location>Chloroplast</location>
    </subcellularLocation>
</comment>
<comment type="similarity">
    <text evidence="1">Belongs to the intron maturase 2 family. MatK subfamily.</text>
</comment>
<reference key="1">
    <citation type="journal article" date="1999" name="Am. J. Bot.">
        <title>Phylogenetic analyses of Andromedeae (Ericaceae subfam. Vaccinioideae).</title>
        <authorList>
            <person name="Kron K.A."/>
            <person name="Judd W.S."/>
            <person name="Crayn D.M."/>
        </authorList>
    </citation>
    <scope>NUCLEOTIDE SEQUENCE [GENOMIC DNA]</scope>
</reference>
<proteinExistence type="inferred from homology"/>
<dbReference type="EMBL" id="AF124569">
    <property type="protein sequence ID" value="AAF05079.1"/>
    <property type="molecule type" value="Genomic_DNA"/>
</dbReference>
<dbReference type="GO" id="GO:0009507">
    <property type="term" value="C:chloroplast"/>
    <property type="evidence" value="ECO:0007669"/>
    <property type="project" value="UniProtKB-SubCell"/>
</dbReference>
<dbReference type="GO" id="GO:0003723">
    <property type="term" value="F:RNA binding"/>
    <property type="evidence" value="ECO:0007669"/>
    <property type="project" value="UniProtKB-KW"/>
</dbReference>
<dbReference type="GO" id="GO:0006397">
    <property type="term" value="P:mRNA processing"/>
    <property type="evidence" value="ECO:0007669"/>
    <property type="project" value="UniProtKB-KW"/>
</dbReference>
<dbReference type="GO" id="GO:0008380">
    <property type="term" value="P:RNA splicing"/>
    <property type="evidence" value="ECO:0007669"/>
    <property type="project" value="UniProtKB-UniRule"/>
</dbReference>
<dbReference type="GO" id="GO:0008033">
    <property type="term" value="P:tRNA processing"/>
    <property type="evidence" value="ECO:0007669"/>
    <property type="project" value="UniProtKB-KW"/>
</dbReference>
<dbReference type="HAMAP" id="MF_01390">
    <property type="entry name" value="MatK"/>
    <property type="match status" value="1"/>
</dbReference>
<dbReference type="InterPro" id="IPR024937">
    <property type="entry name" value="Domain_X"/>
</dbReference>
<dbReference type="InterPro" id="IPR002866">
    <property type="entry name" value="Maturase_MatK"/>
</dbReference>
<dbReference type="InterPro" id="IPR024942">
    <property type="entry name" value="Maturase_MatK_N"/>
</dbReference>
<dbReference type="PANTHER" id="PTHR34811">
    <property type="entry name" value="MATURASE K"/>
    <property type="match status" value="1"/>
</dbReference>
<dbReference type="PANTHER" id="PTHR34811:SF1">
    <property type="entry name" value="MATURASE K"/>
    <property type="match status" value="1"/>
</dbReference>
<dbReference type="Pfam" id="PF01348">
    <property type="entry name" value="Intron_maturas2"/>
    <property type="match status" value="1"/>
</dbReference>
<dbReference type="Pfam" id="PF01824">
    <property type="entry name" value="MatK_N"/>
    <property type="match status" value="1"/>
</dbReference>
<gene>
    <name evidence="1" type="primary">matK</name>
</gene>
<organism>
    <name type="scientific">Andromeda polifolia</name>
    <name type="common">Bog rosemary</name>
    <dbReference type="NCBI Taxonomy" id="95630"/>
    <lineage>
        <taxon>Eukaryota</taxon>
        <taxon>Viridiplantae</taxon>
        <taxon>Streptophyta</taxon>
        <taxon>Embryophyta</taxon>
        <taxon>Tracheophyta</taxon>
        <taxon>Spermatophyta</taxon>
        <taxon>Magnoliopsida</taxon>
        <taxon>eudicotyledons</taxon>
        <taxon>Gunneridae</taxon>
        <taxon>Pentapetalae</taxon>
        <taxon>asterids</taxon>
        <taxon>Ericales</taxon>
        <taxon>Ericaceae</taxon>
        <taxon>Vaccinioideae</taxon>
        <taxon>Andromedeae</taxon>
        <taxon>Andromeda</taxon>
    </lineage>
</organism>